<protein>
    <recommendedName>
        <fullName evidence="1">Putative [LysW]-aminoadipate/[LysW]-glutamate kinase</fullName>
        <ecNumber evidence="1">2.7.2.17</ecNumber>
        <ecNumber evidence="1">2.7.2.19</ecNumber>
    </recommendedName>
</protein>
<keyword id="KW-0028">Amino-acid biosynthesis</keyword>
<keyword id="KW-0055">Arginine biosynthesis</keyword>
<keyword id="KW-0067">ATP-binding</keyword>
<keyword id="KW-0963">Cytoplasm</keyword>
<keyword id="KW-0418">Kinase</keyword>
<keyword id="KW-0457">Lysine biosynthesis</keyword>
<keyword id="KW-0547">Nucleotide-binding</keyword>
<keyword id="KW-1185">Reference proteome</keyword>
<keyword id="KW-0808">Transferase</keyword>
<gene>
    <name evidence="1" type="primary">lysZ</name>
    <name type="ordered locus">Nmar_1290</name>
</gene>
<evidence type="ECO:0000255" key="1">
    <source>
        <dbReference type="HAMAP-Rule" id="MF_02082"/>
    </source>
</evidence>
<feature type="chain" id="PRO_1000092867" description="Putative [LysW]-aminoadipate/[LysW]-glutamate kinase">
    <location>
        <begin position="1"/>
        <end position="267"/>
    </location>
</feature>
<feature type="binding site" evidence="1">
    <location>
        <begin position="37"/>
        <end position="38"/>
    </location>
    <ligand>
        <name>substrate</name>
    </ligand>
</feature>
<feature type="binding site" evidence="1">
    <location>
        <position position="64"/>
    </location>
    <ligand>
        <name>substrate</name>
    </ligand>
</feature>
<feature type="binding site" evidence="1">
    <location>
        <position position="169"/>
    </location>
    <ligand>
        <name>substrate</name>
    </ligand>
</feature>
<feature type="site" description="Transition state stabilizer" evidence="1">
    <location>
        <position position="5"/>
    </location>
</feature>
<feature type="site" description="Transition state stabilizer" evidence="1">
    <location>
        <position position="226"/>
    </location>
</feature>
<proteinExistence type="inferred from homology"/>
<dbReference type="EC" id="2.7.2.17" evidence="1"/>
<dbReference type="EC" id="2.7.2.19" evidence="1"/>
<dbReference type="EMBL" id="CP000866">
    <property type="protein sequence ID" value="ABX13186.1"/>
    <property type="molecule type" value="Genomic_DNA"/>
</dbReference>
<dbReference type="RefSeq" id="WP_012215673.1">
    <property type="nucleotide sequence ID" value="NC_010085.1"/>
</dbReference>
<dbReference type="SMR" id="A9A1K7"/>
<dbReference type="FunCoup" id="A9A1K7">
    <property type="interactions" value="102"/>
</dbReference>
<dbReference type="STRING" id="436308.Nmar_1290"/>
<dbReference type="EnsemblBacteria" id="ABX13186">
    <property type="protein sequence ID" value="ABX13186"/>
    <property type="gene ID" value="Nmar_1290"/>
</dbReference>
<dbReference type="GeneID" id="5773783"/>
<dbReference type="KEGG" id="nmr:Nmar_1290"/>
<dbReference type="eggNOG" id="arCOG00862">
    <property type="taxonomic scope" value="Archaea"/>
</dbReference>
<dbReference type="HOGENOM" id="CLU_053680_2_0_2"/>
<dbReference type="InParanoid" id="A9A1K7"/>
<dbReference type="OrthoDB" id="6816at2157"/>
<dbReference type="PhylomeDB" id="A9A1K7"/>
<dbReference type="UniPathway" id="UPA00033">
    <property type="reaction ID" value="UER00036"/>
</dbReference>
<dbReference type="UniPathway" id="UPA00068"/>
<dbReference type="Proteomes" id="UP000000792">
    <property type="component" value="Chromosome"/>
</dbReference>
<dbReference type="GO" id="GO:0005737">
    <property type="term" value="C:cytoplasm"/>
    <property type="evidence" value="ECO:0007669"/>
    <property type="project" value="UniProtKB-SubCell"/>
</dbReference>
<dbReference type="GO" id="GO:0003991">
    <property type="term" value="F:acetylglutamate kinase activity"/>
    <property type="evidence" value="ECO:0000318"/>
    <property type="project" value="GO_Central"/>
</dbReference>
<dbReference type="GO" id="GO:0005524">
    <property type="term" value="F:ATP binding"/>
    <property type="evidence" value="ECO:0007669"/>
    <property type="project" value="UniProtKB-KW"/>
</dbReference>
<dbReference type="GO" id="GO:0043744">
    <property type="term" value="F:N2-acetyl-L-aminoadipate kinase activity"/>
    <property type="evidence" value="ECO:0007669"/>
    <property type="project" value="RHEA"/>
</dbReference>
<dbReference type="GO" id="GO:0042450">
    <property type="term" value="P:arginine biosynthetic process via ornithine"/>
    <property type="evidence" value="ECO:0007669"/>
    <property type="project" value="UniProtKB-UniRule"/>
</dbReference>
<dbReference type="GO" id="GO:0006526">
    <property type="term" value="P:L-arginine biosynthetic process"/>
    <property type="evidence" value="ECO:0000318"/>
    <property type="project" value="GO_Central"/>
</dbReference>
<dbReference type="GO" id="GO:0019878">
    <property type="term" value="P:lysine biosynthetic process via aminoadipic acid"/>
    <property type="evidence" value="ECO:0007669"/>
    <property type="project" value="UniProtKB-UniRule"/>
</dbReference>
<dbReference type="CDD" id="cd04251">
    <property type="entry name" value="AAK_NAGK-UC"/>
    <property type="match status" value="1"/>
</dbReference>
<dbReference type="Gene3D" id="3.40.1160.10">
    <property type="entry name" value="Acetylglutamate kinase-like"/>
    <property type="match status" value="1"/>
</dbReference>
<dbReference type="HAMAP" id="MF_02082">
    <property type="entry name" value="LysZ"/>
    <property type="match status" value="1"/>
</dbReference>
<dbReference type="InterPro" id="IPR036393">
    <property type="entry name" value="AceGlu_kinase-like_sf"/>
</dbReference>
<dbReference type="InterPro" id="IPR004662">
    <property type="entry name" value="AcgluKinase_fam"/>
</dbReference>
<dbReference type="InterPro" id="IPR001048">
    <property type="entry name" value="Asp/Glu/Uridylate_kinase"/>
</dbReference>
<dbReference type="InterPro" id="IPR037529">
    <property type="entry name" value="LysZ"/>
</dbReference>
<dbReference type="NCBIfam" id="TIGR00761">
    <property type="entry name" value="argB"/>
    <property type="match status" value="1"/>
</dbReference>
<dbReference type="NCBIfam" id="NF010659">
    <property type="entry name" value="PRK14058.1-1"/>
    <property type="match status" value="1"/>
</dbReference>
<dbReference type="NCBIfam" id="NF010662">
    <property type="entry name" value="PRK14058.1-4"/>
    <property type="match status" value="1"/>
</dbReference>
<dbReference type="PANTHER" id="PTHR23342">
    <property type="entry name" value="N-ACETYLGLUTAMATE SYNTHASE"/>
    <property type="match status" value="1"/>
</dbReference>
<dbReference type="PANTHER" id="PTHR23342:SF0">
    <property type="entry name" value="N-ACETYLGLUTAMATE SYNTHASE, MITOCHONDRIAL"/>
    <property type="match status" value="1"/>
</dbReference>
<dbReference type="Pfam" id="PF00696">
    <property type="entry name" value="AA_kinase"/>
    <property type="match status" value="1"/>
</dbReference>
<dbReference type="PIRSF" id="PIRSF000728">
    <property type="entry name" value="NAGK"/>
    <property type="match status" value="1"/>
</dbReference>
<dbReference type="SUPFAM" id="SSF53633">
    <property type="entry name" value="Carbamate kinase-like"/>
    <property type="match status" value="1"/>
</dbReference>
<accession>A9A1K7</accession>
<name>LYSZ_NITMS</name>
<organism>
    <name type="scientific">Nitrosopumilus maritimus (strain SCM1)</name>
    <dbReference type="NCBI Taxonomy" id="436308"/>
    <lineage>
        <taxon>Archaea</taxon>
        <taxon>Nitrososphaerota</taxon>
        <taxon>Nitrososphaeria</taxon>
        <taxon>Nitrosopumilales</taxon>
        <taxon>Nitrosopumilaceae</taxon>
        <taxon>Nitrosopumilus</taxon>
    </lineage>
</organism>
<reference key="1">
    <citation type="journal article" date="2010" name="Proc. Natl. Acad. Sci. U.S.A.">
        <title>Nitrosopumilus maritimus genome reveals unique mechanisms for nitrification and autotrophy in globally distributed marine crenarchaea.</title>
        <authorList>
            <person name="Walker C.B."/>
            <person name="de la Torre J.R."/>
            <person name="Klotz M.G."/>
            <person name="Urakawa H."/>
            <person name="Pinel N."/>
            <person name="Arp D.J."/>
            <person name="Brochier-Armanet C."/>
            <person name="Chain P.S."/>
            <person name="Chan P.P."/>
            <person name="Gollabgir A."/>
            <person name="Hemp J."/>
            <person name="Hugler M."/>
            <person name="Karr E.A."/>
            <person name="Konneke M."/>
            <person name="Shin M."/>
            <person name="Lawton T.J."/>
            <person name="Lowe T."/>
            <person name="Martens-Habbena W."/>
            <person name="Sayavedra-Soto L.A."/>
            <person name="Lang D."/>
            <person name="Sievert S.M."/>
            <person name="Rosenzweig A.C."/>
            <person name="Manning G."/>
            <person name="Stahl D.A."/>
        </authorList>
    </citation>
    <scope>NUCLEOTIDE SEQUENCE [LARGE SCALE GENOMIC DNA]</scope>
    <source>
        <strain>SCM1</strain>
    </source>
</reference>
<comment type="function">
    <text evidence="1">Involved in both the arginine and lysine biosynthetic pathways. Phosphorylates the LysW-bound precursors glutamate (for arginine biosynthesis), respectively alpha-aminoadipate (for lysine biosynthesis).</text>
</comment>
<comment type="catalytic activity">
    <reaction evidence="1">
        <text>[amino-group carrier protein]-C-terminal-N-(1,4-dicarboxybutan-1-yl)-L-glutamine + ATP = [amino-group carrier protein]-C-terminal-N-(1-carboxy-5-phosphooxy-5-oxopentan-1-yl)-L-glutamine + ADP</text>
        <dbReference type="Rhea" id="RHEA:41944"/>
        <dbReference type="Rhea" id="RHEA-COMP:9694"/>
        <dbReference type="Rhea" id="RHEA-COMP:9712"/>
        <dbReference type="ChEBI" id="CHEBI:30616"/>
        <dbReference type="ChEBI" id="CHEBI:78499"/>
        <dbReference type="ChEBI" id="CHEBI:78503"/>
        <dbReference type="ChEBI" id="CHEBI:456216"/>
        <dbReference type="EC" id="2.7.2.17"/>
    </reaction>
</comment>
<comment type="catalytic activity">
    <reaction evidence="1">
        <text>[amino-group carrier protein]-C-terminal-gamma-(L-glutamyl)-L-glutamate + ATP = [amino-group carrier protein]-C-terminal-gamma-(5-phospho-L-glutamyl)-L-glutamate + ADP</text>
        <dbReference type="Rhea" id="RHEA:52632"/>
        <dbReference type="Rhea" id="RHEA-COMP:13311"/>
        <dbReference type="Rhea" id="RHEA-COMP:13313"/>
        <dbReference type="ChEBI" id="CHEBI:30616"/>
        <dbReference type="ChEBI" id="CHEBI:136714"/>
        <dbReference type="ChEBI" id="CHEBI:136717"/>
        <dbReference type="ChEBI" id="CHEBI:456216"/>
        <dbReference type="EC" id="2.7.2.19"/>
    </reaction>
</comment>
<comment type="pathway">
    <text evidence="1">Amino-acid biosynthesis; L-lysine biosynthesis via AAA pathway; L-lysine from L-alpha-aminoadipate (Thermus route): step 2/5.</text>
</comment>
<comment type="pathway">
    <text evidence="1">Amino-acid biosynthesis; L-arginine biosynthesis.</text>
</comment>
<comment type="subcellular location">
    <subcellularLocation>
        <location evidence="1">Cytoplasm</location>
    </subcellularLocation>
</comment>
<comment type="similarity">
    <text evidence="1">Belongs to the acetylglutamate kinase family. LysZ subfamily.</text>
</comment>
<sequence length="267" mass="28551">MITIKIGGSVVDDLHPSTIADIKKIAESEGVILVHGGGKEVTKVCEQLGKEPKFVTSPSGIKSRYTDKETAEIFTMVMSGRINKTIVQMLQKNGINAIGLSGVDAKVIEADRKKKLLIVNEKGRKQAIDGGYTGKIREVNASFIKSLLDQGLTPVISPIAISEESEFLNVDGDRAAAYVAGKVGSDKVLFITNVDGLLMDDKVVPKLTLAEAKEIRPKIGPGMEKKILASTEALDMGVTTALIANGQKENPISSAISHDNCTVIEHE</sequence>